<reference key="1">
    <citation type="journal article" date="2010" name="PLoS ONE">
        <title>The complete multipartite genome sequence of Cupriavidus necator JMP134, a versatile pollutant degrader.</title>
        <authorList>
            <person name="Lykidis A."/>
            <person name="Perez-Pantoja D."/>
            <person name="Ledger T."/>
            <person name="Mavromatis K."/>
            <person name="Anderson I.J."/>
            <person name="Ivanova N.N."/>
            <person name="Hooper S.D."/>
            <person name="Lapidus A."/>
            <person name="Lucas S."/>
            <person name="Gonzalez B."/>
            <person name="Kyrpides N.C."/>
        </authorList>
    </citation>
    <scope>NUCLEOTIDE SEQUENCE [LARGE SCALE GENOMIC DNA]</scope>
    <source>
        <strain>JMP134 / LMG 1197</strain>
    </source>
</reference>
<sequence length="485" mass="52654">MQWEVVIGLETHTQLSTASKIFSGTSTAFGAEPNTQASPVDLALPGVLPVLNKGAVERAIQFGLAIGATIAPRSIFARKNYFYPDLPKGYQISQYEIPVVQGGSITIQVEGKKGEVYEKTVQLTRAHLEEDAGKSLHEDFAGMTGIDLNRAGTPLLEIVTEPDMRSAAEAVAYAKALHSLVVWLGICDGNMQEGSFRCDANVSVRPVGQKEFGTRREIKNLNSFRFLQQAIEYEVQWQINEIEDGRKIQQATVLFDPDTGETRAMRTKEDAHDYRYFPDPDLMPLEIDAAWIERVRGELPELPAAMQARFVSQYGLSAYDASTLTASKAMASYYEAVVAEVGAANAKPAANWLMGDVASQLNREGISIDAAPVKPLQLARLLARIADGTVSNNTAKKDVFPAMWAGESNGDADAIIAAKGLKQMSDTGELEKIIDDVLAANAKSVEEFRAGKEKAFNALVGQAMKATKGKANPAQVNELLKKKLG</sequence>
<organism>
    <name type="scientific">Cupriavidus pinatubonensis (strain JMP 134 / LMG 1197)</name>
    <name type="common">Cupriavidus necator (strain JMP 134)</name>
    <dbReference type="NCBI Taxonomy" id="264198"/>
    <lineage>
        <taxon>Bacteria</taxon>
        <taxon>Pseudomonadati</taxon>
        <taxon>Pseudomonadota</taxon>
        <taxon>Betaproteobacteria</taxon>
        <taxon>Burkholderiales</taxon>
        <taxon>Burkholderiaceae</taxon>
        <taxon>Cupriavidus</taxon>
    </lineage>
</organism>
<gene>
    <name evidence="1" type="primary">gatB</name>
    <name type="ordered locus">Reut_A0071</name>
</gene>
<evidence type="ECO:0000255" key="1">
    <source>
        <dbReference type="HAMAP-Rule" id="MF_00121"/>
    </source>
</evidence>
<accession>Q477I0</accession>
<feature type="chain" id="PRO_0000241263" description="Aspartyl/glutamyl-tRNA(Asn/Gln) amidotransferase subunit B">
    <location>
        <begin position="1"/>
        <end position="485"/>
    </location>
</feature>
<dbReference type="EC" id="6.3.5.-" evidence="1"/>
<dbReference type="EMBL" id="CP000090">
    <property type="protein sequence ID" value="AAZ59453.1"/>
    <property type="molecule type" value="Genomic_DNA"/>
</dbReference>
<dbReference type="SMR" id="Q477I0"/>
<dbReference type="STRING" id="264198.Reut_A0071"/>
<dbReference type="KEGG" id="reu:Reut_A0071"/>
<dbReference type="eggNOG" id="COG0064">
    <property type="taxonomic scope" value="Bacteria"/>
</dbReference>
<dbReference type="HOGENOM" id="CLU_019240_0_0_4"/>
<dbReference type="OrthoDB" id="9804078at2"/>
<dbReference type="GO" id="GO:0050566">
    <property type="term" value="F:asparaginyl-tRNA synthase (glutamine-hydrolyzing) activity"/>
    <property type="evidence" value="ECO:0007669"/>
    <property type="project" value="RHEA"/>
</dbReference>
<dbReference type="GO" id="GO:0005524">
    <property type="term" value="F:ATP binding"/>
    <property type="evidence" value="ECO:0007669"/>
    <property type="project" value="UniProtKB-KW"/>
</dbReference>
<dbReference type="GO" id="GO:0050567">
    <property type="term" value="F:glutaminyl-tRNA synthase (glutamine-hydrolyzing) activity"/>
    <property type="evidence" value="ECO:0007669"/>
    <property type="project" value="UniProtKB-UniRule"/>
</dbReference>
<dbReference type="GO" id="GO:0070681">
    <property type="term" value="P:glutaminyl-tRNAGln biosynthesis via transamidation"/>
    <property type="evidence" value="ECO:0007669"/>
    <property type="project" value="TreeGrafter"/>
</dbReference>
<dbReference type="GO" id="GO:0006412">
    <property type="term" value="P:translation"/>
    <property type="evidence" value="ECO:0007669"/>
    <property type="project" value="UniProtKB-UniRule"/>
</dbReference>
<dbReference type="FunFam" id="1.10.10.410:FF:000001">
    <property type="entry name" value="Aspartyl/glutamyl-tRNA(Asn/Gln) amidotransferase subunit B"/>
    <property type="match status" value="1"/>
</dbReference>
<dbReference type="FunFam" id="1.10.150.380:FF:000001">
    <property type="entry name" value="Aspartyl/glutamyl-tRNA(Asn/Gln) amidotransferase subunit B"/>
    <property type="match status" value="1"/>
</dbReference>
<dbReference type="Gene3D" id="1.10.10.410">
    <property type="match status" value="1"/>
</dbReference>
<dbReference type="Gene3D" id="1.10.150.380">
    <property type="entry name" value="GatB domain, N-terminal subdomain"/>
    <property type="match status" value="1"/>
</dbReference>
<dbReference type="HAMAP" id="MF_00121">
    <property type="entry name" value="GatB"/>
    <property type="match status" value="1"/>
</dbReference>
<dbReference type="InterPro" id="IPR017959">
    <property type="entry name" value="Asn/Gln-tRNA_amidoTrfase_suB/E"/>
</dbReference>
<dbReference type="InterPro" id="IPR006075">
    <property type="entry name" value="Asn/Gln-tRNA_Trfase_suB/E_cat"/>
</dbReference>
<dbReference type="InterPro" id="IPR018027">
    <property type="entry name" value="Asn/Gln_amidotransferase"/>
</dbReference>
<dbReference type="InterPro" id="IPR003789">
    <property type="entry name" value="Asn/Gln_tRNA_amidoTrase-B-like"/>
</dbReference>
<dbReference type="InterPro" id="IPR004413">
    <property type="entry name" value="GatB"/>
</dbReference>
<dbReference type="InterPro" id="IPR042114">
    <property type="entry name" value="GatB_C_1"/>
</dbReference>
<dbReference type="InterPro" id="IPR023168">
    <property type="entry name" value="GatB_Yqey_C_2"/>
</dbReference>
<dbReference type="InterPro" id="IPR017958">
    <property type="entry name" value="Gln-tRNA_amidoTrfase_suB_CS"/>
</dbReference>
<dbReference type="InterPro" id="IPR014746">
    <property type="entry name" value="Gln_synth/guanido_kin_cat_dom"/>
</dbReference>
<dbReference type="NCBIfam" id="TIGR00133">
    <property type="entry name" value="gatB"/>
    <property type="match status" value="1"/>
</dbReference>
<dbReference type="NCBIfam" id="NF004012">
    <property type="entry name" value="PRK05477.1-2"/>
    <property type="match status" value="1"/>
</dbReference>
<dbReference type="NCBIfam" id="NF004014">
    <property type="entry name" value="PRK05477.1-4"/>
    <property type="match status" value="1"/>
</dbReference>
<dbReference type="NCBIfam" id="NF004015">
    <property type="entry name" value="PRK05477.1-5"/>
    <property type="match status" value="1"/>
</dbReference>
<dbReference type="PANTHER" id="PTHR11659">
    <property type="entry name" value="GLUTAMYL-TRNA GLN AMIDOTRANSFERASE SUBUNIT B MITOCHONDRIAL AND PROKARYOTIC PET112-RELATED"/>
    <property type="match status" value="1"/>
</dbReference>
<dbReference type="PANTHER" id="PTHR11659:SF0">
    <property type="entry name" value="GLUTAMYL-TRNA(GLN) AMIDOTRANSFERASE SUBUNIT B, MITOCHONDRIAL"/>
    <property type="match status" value="1"/>
</dbReference>
<dbReference type="Pfam" id="PF02934">
    <property type="entry name" value="GatB_N"/>
    <property type="match status" value="1"/>
</dbReference>
<dbReference type="Pfam" id="PF02637">
    <property type="entry name" value="GatB_Yqey"/>
    <property type="match status" value="1"/>
</dbReference>
<dbReference type="SMART" id="SM00845">
    <property type="entry name" value="GatB_Yqey"/>
    <property type="match status" value="1"/>
</dbReference>
<dbReference type="SUPFAM" id="SSF89095">
    <property type="entry name" value="GatB/YqeY motif"/>
    <property type="match status" value="1"/>
</dbReference>
<dbReference type="SUPFAM" id="SSF55931">
    <property type="entry name" value="Glutamine synthetase/guanido kinase"/>
    <property type="match status" value="1"/>
</dbReference>
<dbReference type="PROSITE" id="PS01234">
    <property type="entry name" value="GATB"/>
    <property type="match status" value="1"/>
</dbReference>
<name>GATB_CUPPJ</name>
<comment type="function">
    <text evidence="1">Allows the formation of correctly charged Asn-tRNA(Asn) or Gln-tRNA(Gln) through the transamidation of misacylated Asp-tRNA(Asn) or Glu-tRNA(Gln) in organisms which lack either or both of asparaginyl-tRNA or glutaminyl-tRNA synthetases. The reaction takes place in the presence of glutamine and ATP through an activated phospho-Asp-tRNA(Asn) or phospho-Glu-tRNA(Gln).</text>
</comment>
<comment type="catalytic activity">
    <reaction evidence="1">
        <text>L-glutamyl-tRNA(Gln) + L-glutamine + ATP + H2O = L-glutaminyl-tRNA(Gln) + L-glutamate + ADP + phosphate + H(+)</text>
        <dbReference type="Rhea" id="RHEA:17521"/>
        <dbReference type="Rhea" id="RHEA-COMP:9681"/>
        <dbReference type="Rhea" id="RHEA-COMP:9684"/>
        <dbReference type="ChEBI" id="CHEBI:15377"/>
        <dbReference type="ChEBI" id="CHEBI:15378"/>
        <dbReference type="ChEBI" id="CHEBI:29985"/>
        <dbReference type="ChEBI" id="CHEBI:30616"/>
        <dbReference type="ChEBI" id="CHEBI:43474"/>
        <dbReference type="ChEBI" id="CHEBI:58359"/>
        <dbReference type="ChEBI" id="CHEBI:78520"/>
        <dbReference type="ChEBI" id="CHEBI:78521"/>
        <dbReference type="ChEBI" id="CHEBI:456216"/>
    </reaction>
</comment>
<comment type="catalytic activity">
    <reaction evidence="1">
        <text>L-aspartyl-tRNA(Asn) + L-glutamine + ATP + H2O = L-asparaginyl-tRNA(Asn) + L-glutamate + ADP + phosphate + 2 H(+)</text>
        <dbReference type="Rhea" id="RHEA:14513"/>
        <dbReference type="Rhea" id="RHEA-COMP:9674"/>
        <dbReference type="Rhea" id="RHEA-COMP:9677"/>
        <dbReference type="ChEBI" id="CHEBI:15377"/>
        <dbReference type="ChEBI" id="CHEBI:15378"/>
        <dbReference type="ChEBI" id="CHEBI:29985"/>
        <dbReference type="ChEBI" id="CHEBI:30616"/>
        <dbReference type="ChEBI" id="CHEBI:43474"/>
        <dbReference type="ChEBI" id="CHEBI:58359"/>
        <dbReference type="ChEBI" id="CHEBI:78515"/>
        <dbReference type="ChEBI" id="CHEBI:78516"/>
        <dbReference type="ChEBI" id="CHEBI:456216"/>
    </reaction>
</comment>
<comment type="subunit">
    <text evidence="1">Heterotrimer of A, B and C subunits.</text>
</comment>
<comment type="similarity">
    <text evidence="1">Belongs to the GatB/GatE family. GatB subfamily.</text>
</comment>
<keyword id="KW-0067">ATP-binding</keyword>
<keyword id="KW-0436">Ligase</keyword>
<keyword id="KW-0547">Nucleotide-binding</keyword>
<keyword id="KW-0648">Protein biosynthesis</keyword>
<proteinExistence type="inferred from homology"/>
<protein>
    <recommendedName>
        <fullName evidence="1">Aspartyl/glutamyl-tRNA(Asn/Gln) amidotransferase subunit B</fullName>
        <shortName evidence="1">Asp/Glu-ADT subunit B</shortName>
        <ecNumber evidence="1">6.3.5.-</ecNumber>
    </recommendedName>
</protein>